<reference key="1">
    <citation type="journal article" date="2000" name="Am. J. Bot.">
        <title>Relationships within Cupressaceae sensu lato: a combined morphological and molecular approach.</title>
        <authorList>
            <person name="Gadek P.A."/>
            <person name="Alpers D.L."/>
            <person name="Heslewood M.M."/>
            <person name="Quinn C.J."/>
        </authorList>
    </citation>
    <scope>NUCLEOTIDE SEQUENCE [GENOMIC DNA]</scope>
</reference>
<evidence type="ECO:0000255" key="1">
    <source>
        <dbReference type="HAMAP-Rule" id="MF_01390"/>
    </source>
</evidence>
<proteinExistence type="inferred from homology"/>
<sequence>MDEFQRNSNKHRSWQQFFLYPLFFREDLXAIAHYHHLDRSGSSEPTEILVSNFLSFLTVKRSXRRIRKQNNSISLLGNSDSNKLIEYNKNSSFQLILEGFTIVLEALFAMRSKXFXKGMDGWNSFRSIHCIFPFMEAKLPHSBYISDLRVPYSIHPEILVRIFRRWIRDVPSLHLLRSILHEWKKSFNRENLQKALITQRENTRFSLFLWNSYVYECESFLIPLIKRILNSQSLLYGSFPDRTHFEKKIKDIVLFPPHKISPKKIWLLKDSFIHYVRYGERSLIALKGTHLQVKKCRYHLFHFWQYYFHLWFQPYRICSLELSKTSFSFLGFFMHVKMRPLVVRAKMLDDLFITDLITNELNSTAPIRSILFSLAKEKFCDISGWPISKLSWTSLSDDDIXDRFDRIWXXLFHYYSGSINQDGLYHIKYILLLSCAKTLACKHK</sequence>
<name>MATK_CHALA</name>
<protein>
    <recommendedName>
        <fullName evidence="1">Maturase K</fullName>
    </recommendedName>
    <alternativeName>
        <fullName evidence="1">Intron maturase</fullName>
    </alternativeName>
</protein>
<dbReference type="EMBL" id="AF152181">
    <property type="protein sequence ID" value="AAF25734.2"/>
    <property type="molecule type" value="Genomic_DNA"/>
</dbReference>
<dbReference type="GO" id="GO:0009507">
    <property type="term" value="C:chloroplast"/>
    <property type="evidence" value="ECO:0007669"/>
    <property type="project" value="UniProtKB-SubCell"/>
</dbReference>
<dbReference type="GO" id="GO:0003723">
    <property type="term" value="F:RNA binding"/>
    <property type="evidence" value="ECO:0007669"/>
    <property type="project" value="UniProtKB-KW"/>
</dbReference>
<dbReference type="GO" id="GO:0006397">
    <property type="term" value="P:mRNA processing"/>
    <property type="evidence" value="ECO:0007669"/>
    <property type="project" value="UniProtKB-KW"/>
</dbReference>
<dbReference type="GO" id="GO:0008033">
    <property type="term" value="P:tRNA processing"/>
    <property type="evidence" value="ECO:0007669"/>
    <property type="project" value="UniProtKB-KW"/>
</dbReference>
<dbReference type="HAMAP" id="MF_01390">
    <property type="entry name" value="MatK"/>
    <property type="match status" value="1"/>
</dbReference>
<dbReference type="InterPro" id="IPR024937">
    <property type="entry name" value="Domain_X"/>
</dbReference>
<dbReference type="InterPro" id="IPR002866">
    <property type="entry name" value="Maturase_MatK"/>
</dbReference>
<dbReference type="InterPro" id="IPR024942">
    <property type="entry name" value="Maturase_MatK_N"/>
</dbReference>
<dbReference type="PANTHER" id="PTHR34811">
    <property type="entry name" value="MATURASE K"/>
    <property type="match status" value="1"/>
</dbReference>
<dbReference type="PANTHER" id="PTHR34811:SF1">
    <property type="entry name" value="MATURASE K"/>
    <property type="match status" value="1"/>
</dbReference>
<dbReference type="Pfam" id="PF01348">
    <property type="entry name" value="Intron_maturas2"/>
    <property type="match status" value="1"/>
</dbReference>
<dbReference type="Pfam" id="PF01824">
    <property type="entry name" value="MatK_N"/>
    <property type="match status" value="1"/>
</dbReference>
<feature type="chain" id="PRO_0000143325" description="Maturase K">
    <location>
        <begin position="1"/>
        <end position="444" status="greater than"/>
    </location>
</feature>
<feature type="non-terminal residue">
    <location>
        <position position="444"/>
    </location>
</feature>
<geneLocation type="chloroplast"/>
<organism>
    <name type="scientific">Chamaecyparis lawsoniana</name>
    <name type="common">Lawson false cypress</name>
    <name type="synonym">Cupressus lawsoniana</name>
    <dbReference type="NCBI Taxonomy" id="58030"/>
    <lineage>
        <taxon>Eukaryota</taxon>
        <taxon>Viridiplantae</taxon>
        <taxon>Streptophyta</taxon>
        <taxon>Embryophyta</taxon>
        <taxon>Tracheophyta</taxon>
        <taxon>Spermatophyta</taxon>
        <taxon>Pinopsida</taxon>
        <taxon>Pinidae</taxon>
        <taxon>Conifers II</taxon>
        <taxon>Cupressales</taxon>
        <taxon>Cupressaceae</taxon>
        <taxon>Chamaecyparis</taxon>
    </lineage>
</organism>
<gene>
    <name evidence="1" type="primary">matK</name>
</gene>
<accession>Q9MSV6</accession>
<comment type="function">
    <text evidence="1">Usually encoded in the trnK tRNA gene intron. Probably assists in splicing its own and other chloroplast group II introns.</text>
</comment>
<comment type="subcellular location">
    <subcellularLocation>
        <location>Plastid</location>
        <location>Chloroplast</location>
    </subcellularLocation>
</comment>
<comment type="similarity">
    <text evidence="1">Belongs to the intron maturase 2 family. MatK subfamily.</text>
</comment>
<keyword id="KW-0150">Chloroplast</keyword>
<keyword id="KW-0507">mRNA processing</keyword>
<keyword id="KW-0934">Plastid</keyword>
<keyword id="KW-0694">RNA-binding</keyword>
<keyword id="KW-0819">tRNA processing</keyword>